<proteinExistence type="inferred from homology"/>
<gene>
    <name type="ORF">GA20639</name>
</gene>
<evidence type="ECO:0000250" key="1"/>
<evidence type="ECO:0000250" key="2">
    <source>
        <dbReference type="UniProtKB" id="Q7L266"/>
    </source>
</evidence>
<evidence type="ECO:0000305" key="3"/>
<organism>
    <name type="scientific">Drosophila pseudoobscura pseudoobscura</name>
    <name type="common">Fruit fly</name>
    <dbReference type="NCBI Taxonomy" id="46245"/>
    <lineage>
        <taxon>Eukaryota</taxon>
        <taxon>Metazoa</taxon>
        <taxon>Ecdysozoa</taxon>
        <taxon>Arthropoda</taxon>
        <taxon>Hexapoda</taxon>
        <taxon>Insecta</taxon>
        <taxon>Pterygota</taxon>
        <taxon>Neoptera</taxon>
        <taxon>Endopterygota</taxon>
        <taxon>Diptera</taxon>
        <taxon>Brachycera</taxon>
        <taxon>Muscomorpha</taxon>
        <taxon>Ephydroidea</taxon>
        <taxon>Drosophilidae</taxon>
        <taxon>Drosophila</taxon>
        <taxon>Sophophora</taxon>
    </lineage>
</organism>
<name>ASGL1_DROPS</name>
<dbReference type="EC" id="3.4.19.5"/>
<dbReference type="EC" id="3.5.1.1"/>
<dbReference type="EMBL" id="CH379063">
    <property type="protein sequence ID" value="EAL32760.1"/>
    <property type="molecule type" value="Genomic_DNA"/>
</dbReference>
<dbReference type="RefSeq" id="XP_001355701.1">
    <property type="nucleotide sequence ID" value="XM_001355665.3"/>
</dbReference>
<dbReference type="SMR" id="Q29I93"/>
<dbReference type="FunCoup" id="Q29I93">
    <property type="interactions" value="146"/>
</dbReference>
<dbReference type="STRING" id="46245.Q29I93"/>
<dbReference type="EnsemblMetazoa" id="FBtr0275211">
    <property type="protein sequence ID" value="FBpp0273649"/>
    <property type="gene ID" value="FBgn0080633"/>
</dbReference>
<dbReference type="KEGG" id="dpo:4815446"/>
<dbReference type="eggNOG" id="KOG1592">
    <property type="taxonomic scope" value="Eukaryota"/>
</dbReference>
<dbReference type="HOGENOM" id="CLU_021603_1_2_1"/>
<dbReference type="InParanoid" id="Q29I93"/>
<dbReference type="OMA" id="ILAAMEY"/>
<dbReference type="PhylomeDB" id="Q29I93"/>
<dbReference type="Proteomes" id="UP000001819">
    <property type="component" value="Chromosome X"/>
</dbReference>
<dbReference type="Bgee" id="FBgn0080633">
    <property type="expression patterns" value="Expressed in male reproductive system and 3 other cell types or tissues"/>
</dbReference>
<dbReference type="GO" id="GO:0005737">
    <property type="term" value="C:cytoplasm"/>
    <property type="evidence" value="ECO:0000250"/>
    <property type="project" value="UniProtKB"/>
</dbReference>
<dbReference type="GO" id="GO:0004067">
    <property type="term" value="F:asparaginase activity"/>
    <property type="evidence" value="ECO:0007669"/>
    <property type="project" value="UniProtKB-EC"/>
</dbReference>
<dbReference type="GO" id="GO:0008798">
    <property type="term" value="F:beta-aspartyl-peptidase activity"/>
    <property type="evidence" value="ECO:0007669"/>
    <property type="project" value="UniProtKB-EC"/>
</dbReference>
<dbReference type="GO" id="GO:0033345">
    <property type="term" value="P:asparagine catabolic process via L-aspartate"/>
    <property type="evidence" value="ECO:0000250"/>
    <property type="project" value="UniProtKB"/>
</dbReference>
<dbReference type="GO" id="GO:0006508">
    <property type="term" value="P:proteolysis"/>
    <property type="evidence" value="ECO:0007669"/>
    <property type="project" value="UniProtKB-KW"/>
</dbReference>
<dbReference type="CDD" id="cd04702">
    <property type="entry name" value="ASRGL1_like"/>
    <property type="match status" value="1"/>
</dbReference>
<dbReference type="FunFam" id="3.60.20.30:FF:000001">
    <property type="entry name" value="Isoaspartyl peptidase/L-asparaginase"/>
    <property type="match status" value="1"/>
</dbReference>
<dbReference type="Gene3D" id="3.60.20.30">
    <property type="entry name" value="(Glycosyl)asparaginase"/>
    <property type="match status" value="1"/>
</dbReference>
<dbReference type="InterPro" id="IPR033844">
    <property type="entry name" value="ASRGL1_meta"/>
</dbReference>
<dbReference type="InterPro" id="IPR029055">
    <property type="entry name" value="Ntn_hydrolases_N"/>
</dbReference>
<dbReference type="InterPro" id="IPR000246">
    <property type="entry name" value="Peptidase_T2"/>
</dbReference>
<dbReference type="PANTHER" id="PTHR10188:SF41">
    <property type="entry name" value="ISOASPARTYL PEPTIDASE_L-ASPARAGINASE"/>
    <property type="match status" value="1"/>
</dbReference>
<dbReference type="PANTHER" id="PTHR10188">
    <property type="entry name" value="L-ASPARAGINASE"/>
    <property type="match status" value="1"/>
</dbReference>
<dbReference type="Pfam" id="PF01112">
    <property type="entry name" value="Asparaginase_2"/>
    <property type="match status" value="1"/>
</dbReference>
<dbReference type="SUPFAM" id="SSF56235">
    <property type="entry name" value="N-terminal nucleophile aminohydrolases (Ntn hydrolases)"/>
    <property type="match status" value="1"/>
</dbReference>
<sequence length="325" mass="34399">MPRPVLLIHGGAGDIPDSRIAGKFKGIKEALRCAWGSLVPASGAKGGALDAVETAVRSMELDENFNAGYGSCLNTDGQVEMEASLMEGQDLRAGCVTLLRDVMHPITVARRLMEKQRHTFIGGEAAQELALSTGSERLPANALVTEGARFTLQQFKEQLTQGKDPFFARTELAAEQKTDPSGETVGAVAMDHNGQIVVGTSTGGITGKWPGRIGDTPILGSGTYADNARGGVSTTGHGETIMRYNLAQRILAAIEHKGMSAQAAADQECREMTRRIGGTGGAIVVGHAGDLGISFTSQRMAWGYIQDDTIFYGIEGQVVHQEPLS</sequence>
<accession>Q29I93</accession>
<protein>
    <recommendedName>
        <fullName>Probable isoaspartyl peptidase/L-asparaginase GA20639</fullName>
        <ecNumber>3.4.19.5</ecNumber>
        <ecNumber>3.5.1.1</ecNumber>
    </recommendedName>
    <alternativeName>
        <fullName>Beta-aspartyl-peptidase GA20639</fullName>
    </alternativeName>
    <alternativeName>
        <fullName>Isoaspartyl dipeptidase GA20639</fullName>
    </alternativeName>
    <alternativeName>
        <fullName>L-asparagine amidohydrolase GA20639</fullName>
    </alternativeName>
    <component>
        <recommendedName>
            <fullName>Probable isoaspartyl peptidase/L-asparaginase GA20639 alpha chain</fullName>
        </recommendedName>
    </component>
    <component>
        <recommendedName>
            <fullName>Probable isoaspartyl peptidase/L-asparaginase GA20639 beta chain</fullName>
        </recommendedName>
    </component>
</protein>
<feature type="chain" id="PRO_0000420569" description="Probable isoaspartyl peptidase/L-asparaginase GA20639 alpha chain">
    <location>
        <begin position="1"/>
        <end position="183"/>
    </location>
</feature>
<feature type="chain" id="PRO_0000420570" description="Probable isoaspartyl peptidase/L-asparaginase GA20639 beta chain">
    <location>
        <begin position="184"/>
        <end position="325"/>
    </location>
</feature>
<feature type="active site" description="Nucleophile" evidence="1">
    <location>
        <position position="184"/>
    </location>
</feature>
<feature type="binding site" evidence="1">
    <location>
        <begin position="212"/>
        <end position="215"/>
    </location>
    <ligand>
        <name>substrate</name>
    </ligand>
</feature>
<feature type="binding site" evidence="1">
    <location>
        <begin position="235"/>
        <end position="238"/>
    </location>
    <ligand>
        <name>substrate</name>
    </ligand>
</feature>
<keyword id="KW-0068">Autocatalytic cleavage</keyword>
<keyword id="KW-0378">Hydrolase</keyword>
<keyword id="KW-0645">Protease</keyword>
<keyword id="KW-1185">Reference proteome</keyword>
<comment type="function">
    <text evidence="1">Has both L-asparaginase and beta-aspartyl peptidase activity. Does not have aspartylglucosaminidase activity and is inactive toward GlcNAc-L-Asn. Likewise, has no activity toward glutamine.</text>
</comment>
<comment type="catalytic activity">
    <reaction evidence="2">
        <text>L-asparagine + H2O = L-aspartate + NH4(+)</text>
        <dbReference type="Rhea" id="RHEA:21016"/>
        <dbReference type="ChEBI" id="CHEBI:15377"/>
        <dbReference type="ChEBI" id="CHEBI:28938"/>
        <dbReference type="ChEBI" id="CHEBI:29991"/>
        <dbReference type="ChEBI" id="CHEBI:58048"/>
        <dbReference type="EC" id="3.5.1.1"/>
    </reaction>
</comment>
<comment type="catalytic activity">
    <reaction evidence="2">
        <text>Cleavage of a beta-linked Asp residue from the N-terminus of a polypeptide.</text>
        <dbReference type="EC" id="3.4.19.5"/>
    </reaction>
</comment>
<comment type="subunit">
    <text evidence="1">Heterodimer of an alpha and beta chain produced by autocleavage.</text>
</comment>
<comment type="PTM">
    <text evidence="1">Cleaved into an alpha and beta chain by autocatalysis; this activates the enzyme. The N-terminal residue of the beta subunit is responsible for the nucleophile hydrolase activity.</text>
</comment>
<comment type="similarity">
    <text evidence="3">Belongs to the Ntn-hydrolase family.</text>
</comment>
<reference key="1">
    <citation type="journal article" date="2005" name="Genome Res.">
        <title>Comparative genome sequencing of Drosophila pseudoobscura: chromosomal, gene, and cis-element evolution.</title>
        <authorList>
            <person name="Richards S."/>
            <person name="Liu Y."/>
            <person name="Bettencourt B.R."/>
            <person name="Hradecky P."/>
            <person name="Letovsky S."/>
            <person name="Nielsen R."/>
            <person name="Thornton K."/>
            <person name="Hubisz M.J."/>
            <person name="Chen R."/>
            <person name="Meisel R.P."/>
            <person name="Couronne O."/>
            <person name="Hua S."/>
            <person name="Smith M.A."/>
            <person name="Zhang P."/>
            <person name="Liu J."/>
            <person name="Bussemaker H.J."/>
            <person name="van Batenburg M.F."/>
            <person name="Howells S.L."/>
            <person name="Scherer S.E."/>
            <person name="Sodergren E."/>
            <person name="Matthews B.B."/>
            <person name="Crosby M.A."/>
            <person name="Schroeder A.J."/>
            <person name="Ortiz-Barrientos D."/>
            <person name="Rives C.M."/>
            <person name="Metzker M.L."/>
            <person name="Muzny D.M."/>
            <person name="Scott G."/>
            <person name="Steffen D."/>
            <person name="Wheeler D.A."/>
            <person name="Worley K.C."/>
            <person name="Havlak P."/>
            <person name="Durbin K.J."/>
            <person name="Egan A."/>
            <person name="Gill R."/>
            <person name="Hume J."/>
            <person name="Morgan M.B."/>
            <person name="Miner G."/>
            <person name="Hamilton C."/>
            <person name="Huang Y."/>
            <person name="Waldron L."/>
            <person name="Verduzco D."/>
            <person name="Clerc-Blankenburg K.P."/>
            <person name="Dubchak I."/>
            <person name="Noor M.A.F."/>
            <person name="Anderson W."/>
            <person name="White K.P."/>
            <person name="Clark A.G."/>
            <person name="Schaeffer S.W."/>
            <person name="Gelbart W.M."/>
            <person name="Weinstock G.M."/>
            <person name="Gibbs R.A."/>
        </authorList>
    </citation>
    <scope>NUCLEOTIDE SEQUENCE [LARGE SCALE GENOMIC DNA]</scope>
    <source>
        <strain>MV2-25 / Tucson 14011-0121.94</strain>
    </source>
</reference>